<feature type="chain" id="PRO_0000201902" description="Endoribonuclease MazF4">
    <location>
        <begin position="1"/>
        <end position="105"/>
    </location>
</feature>
<feature type="strand" evidence="7">
    <location>
        <begin position="8"/>
        <end position="12"/>
    </location>
</feature>
<feature type="strand" evidence="7">
    <location>
        <begin position="19"/>
        <end position="23"/>
    </location>
</feature>
<feature type="helix" evidence="7">
    <location>
        <begin position="27"/>
        <end position="32"/>
    </location>
</feature>
<feature type="strand" evidence="7">
    <location>
        <begin position="33"/>
        <end position="43"/>
    </location>
</feature>
<feature type="strand" evidence="7">
    <location>
        <begin position="51"/>
        <end position="53"/>
    </location>
</feature>
<feature type="strand" evidence="7">
    <location>
        <begin position="58"/>
        <end position="60"/>
    </location>
</feature>
<feature type="strand" evidence="7">
    <location>
        <begin position="62"/>
        <end position="73"/>
    </location>
</feature>
<feature type="helix" evidence="7">
    <location>
        <begin position="74"/>
        <end position="76"/>
    </location>
</feature>
<feature type="strand" evidence="7">
    <location>
        <begin position="80"/>
        <end position="83"/>
    </location>
</feature>
<feature type="helix" evidence="7">
    <location>
        <begin position="86"/>
        <end position="99"/>
    </location>
</feature>
<reference key="1">
    <citation type="journal article" date="1998" name="Nature">
        <title>Deciphering the biology of Mycobacterium tuberculosis from the complete genome sequence.</title>
        <authorList>
            <person name="Cole S.T."/>
            <person name="Brosch R."/>
            <person name="Parkhill J."/>
            <person name="Garnier T."/>
            <person name="Churcher C.M."/>
            <person name="Harris D.E."/>
            <person name="Gordon S.V."/>
            <person name="Eiglmeier K."/>
            <person name="Gas S."/>
            <person name="Barry C.E. III"/>
            <person name="Tekaia F."/>
            <person name="Badcock K."/>
            <person name="Basham D."/>
            <person name="Brown D."/>
            <person name="Chillingworth T."/>
            <person name="Connor R."/>
            <person name="Davies R.M."/>
            <person name="Devlin K."/>
            <person name="Feltwell T."/>
            <person name="Gentles S."/>
            <person name="Hamlin N."/>
            <person name="Holroyd S."/>
            <person name="Hornsby T."/>
            <person name="Jagels K."/>
            <person name="Krogh A."/>
            <person name="McLean J."/>
            <person name="Moule S."/>
            <person name="Murphy L.D."/>
            <person name="Oliver S."/>
            <person name="Osborne J."/>
            <person name="Quail M.A."/>
            <person name="Rajandream M.A."/>
            <person name="Rogers J."/>
            <person name="Rutter S."/>
            <person name="Seeger K."/>
            <person name="Skelton S."/>
            <person name="Squares S."/>
            <person name="Squares R."/>
            <person name="Sulston J.E."/>
            <person name="Taylor K."/>
            <person name="Whitehead S."/>
            <person name="Barrell B.G."/>
        </authorList>
    </citation>
    <scope>NUCLEOTIDE SEQUENCE [LARGE SCALE GENOMIC DNA]</scope>
    <source>
        <strain>ATCC 25618 / H37Rv</strain>
    </source>
</reference>
<reference key="2">
    <citation type="journal article" date="2008" name="Mol. Microbiol.">
        <title>The mRNA interferases, MazF-mt3 and MazF-mt7 from Mycobacterium tuberculosis target unique pentad sequences in single-stranded RNA.</title>
        <authorList>
            <person name="Zhu L."/>
            <person name="Phadtare S."/>
            <person name="Nariya H."/>
            <person name="Ouyang M."/>
            <person name="Husson R.N."/>
            <person name="Inouye M."/>
        </authorList>
    </citation>
    <scope>FUNCTION AS AN MRNA INTERFERASE</scope>
    <scope>SUBSTRATE SPECIFICITY</scope>
</reference>
<reference key="3">
    <citation type="journal article" date="2006" name="J. Biol. Chem.">
        <title>Characterization of mRNA interferases from Mycobacterium tuberculosis.</title>
        <authorList>
            <person name="Zhu L."/>
            <person name="Zhang Y."/>
            <person name="Teh J.S."/>
            <person name="Zhang J."/>
            <person name="Connell N."/>
            <person name="Rubin H."/>
            <person name="Inouye M."/>
        </authorList>
    </citation>
    <scope>EXPRESSION IN E.COLI</scope>
    <source>
        <strain>ATCC 25618 / H37Rv</strain>
    </source>
</reference>
<reference key="4">
    <citation type="journal article" date="2010" name="Nucleic Acids Res.">
        <title>Characterization of an interplay between a Mycobacterium tuberculosis MazF homolog, Rv1495 and its sole DNA topoisomerase I.</title>
        <authorList>
            <person name="Huang F."/>
            <person name="He Z.G."/>
        </authorList>
    </citation>
    <scope>INTERACTION WITH TOPA</scope>
    <scope>INHIBITION OF TOPOISOMERASE DNA CLEAVAGE</scope>
    <scope>INHIBITION OF MRNA CLEAVAGE BY TOPOISOMERASE</scope>
    <scope>ACTIVITY REGULATION</scope>
    <scope>EXPRESSION IN M.SMEGMATIS</scope>
    <source>
        <strain>ATCC 25618 / H37Rv</strain>
    </source>
</reference>
<reference key="5">
    <citation type="journal article" date="2011" name="Mol. Cell. Proteomics">
        <title>Proteogenomic analysis of Mycobacterium tuberculosis by high resolution mass spectrometry.</title>
        <authorList>
            <person name="Kelkar D.S."/>
            <person name="Kumar D."/>
            <person name="Kumar P."/>
            <person name="Balakrishnan L."/>
            <person name="Muthusamy B."/>
            <person name="Yadav A.K."/>
            <person name="Shrivastava P."/>
            <person name="Marimuthu A."/>
            <person name="Anand S."/>
            <person name="Sundaram H."/>
            <person name="Kingsbury R."/>
            <person name="Harsha H.C."/>
            <person name="Nair B."/>
            <person name="Prasad T.S."/>
            <person name="Chauhan D.S."/>
            <person name="Katoch K."/>
            <person name="Katoch V.M."/>
            <person name="Kumar P."/>
            <person name="Chaerkady R."/>
            <person name="Ramachandran S."/>
            <person name="Dash D."/>
            <person name="Pandey A."/>
        </authorList>
    </citation>
    <scope>IDENTIFICATION BY MASS SPECTROMETRY [LARGE SCALE ANALYSIS]</scope>
    <source>
        <strain>ATCC 25618 / H37Rv</strain>
    </source>
</reference>
<dbReference type="EC" id="3.1.-.-"/>
<dbReference type="EMBL" id="AL123456">
    <property type="protein sequence ID" value="CCP44256.1"/>
    <property type="molecule type" value="Genomic_DNA"/>
</dbReference>
<dbReference type="PIR" id="B70712">
    <property type="entry name" value="B70712"/>
</dbReference>
<dbReference type="RefSeq" id="NP_216011.1">
    <property type="nucleotide sequence ID" value="NC_000962.3"/>
</dbReference>
<dbReference type="RefSeq" id="WP_003407593.1">
    <property type="nucleotide sequence ID" value="NZ_NVQJ01000004.1"/>
</dbReference>
<dbReference type="PDB" id="5XE2">
    <property type="method" value="X-ray"/>
    <property type="resolution" value="2.01 A"/>
    <property type="chains" value="A=1-105"/>
</dbReference>
<dbReference type="PDB" id="5XE3">
    <property type="method" value="X-ray"/>
    <property type="resolution" value="2.30 A"/>
    <property type="chains" value="A/B/C/D=1-105"/>
</dbReference>
<dbReference type="PDBsum" id="5XE2"/>
<dbReference type="PDBsum" id="5XE3"/>
<dbReference type="SMR" id="P9WII5"/>
<dbReference type="STRING" id="83332.Rv1495"/>
<dbReference type="PaxDb" id="83332-Rv1495"/>
<dbReference type="DNASU" id="886504"/>
<dbReference type="GeneID" id="45425475"/>
<dbReference type="GeneID" id="886504"/>
<dbReference type="KEGG" id="mtu:Rv1495"/>
<dbReference type="KEGG" id="mtv:RVBD_1495"/>
<dbReference type="TubercuList" id="Rv1495"/>
<dbReference type="eggNOG" id="COG2337">
    <property type="taxonomic scope" value="Bacteria"/>
</dbReference>
<dbReference type="InParanoid" id="P9WII5"/>
<dbReference type="OrthoDB" id="4966310at2"/>
<dbReference type="Proteomes" id="UP000001584">
    <property type="component" value="Chromosome"/>
</dbReference>
<dbReference type="GO" id="GO:0003677">
    <property type="term" value="F:DNA binding"/>
    <property type="evidence" value="ECO:0007669"/>
    <property type="project" value="InterPro"/>
</dbReference>
<dbReference type="GO" id="GO:0004857">
    <property type="term" value="F:enzyme inhibitor activity"/>
    <property type="evidence" value="ECO:0000314"/>
    <property type="project" value="UniProtKB"/>
</dbReference>
<dbReference type="GO" id="GO:0004521">
    <property type="term" value="F:RNA endonuclease activity"/>
    <property type="evidence" value="ECO:0000318"/>
    <property type="project" value="GO_Central"/>
</dbReference>
<dbReference type="GO" id="GO:0006402">
    <property type="term" value="P:mRNA catabolic process"/>
    <property type="evidence" value="ECO:0000318"/>
    <property type="project" value="GO_Central"/>
</dbReference>
<dbReference type="GO" id="GO:0016075">
    <property type="term" value="P:rRNA catabolic process"/>
    <property type="evidence" value="ECO:0000318"/>
    <property type="project" value="GO_Central"/>
</dbReference>
<dbReference type="Gene3D" id="2.30.30.110">
    <property type="match status" value="1"/>
</dbReference>
<dbReference type="InterPro" id="IPR003477">
    <property type="entry name" value="PemK-like"/>
</dbReference>
<dbReference type="InterPro" id="IPR011067">
    <property type="entry name" value="Plasmid_toxin/cell-grow_inhib"/>
</dbReference>
<dbReference type="PANTHER" id="PTHR33988:SF2">
    <property type="entry name" value="ENDORIBONUCLEASE MAZF"/>
    <property type="match status" value="1"/>
</dbReference>
<dbReference type="PANTHER" id="PTHR33988">
    <property type="entry name" value="ENDORIBONUCLEASE MAZF-RELATED"/>
    <property type="match status" value="1"/>
</dbReference>
<dbReference type="Pfam" id="PF02452">
    <property type="entry name" value="PemK_toxin"/>
    <property type="match status" value="1"/>
</dbReference>
<dbReference type="SUPFAM" id="SSF50118">
    <property type="entry name" value="Cell growth inhibitor/plasmid maintenance toxic component"/>
    <property type="match status" value="1"/>
</dbReference>
<evidence type="ECO:0000250" key="1">
    <source>
        <dbReference type="UniProtKB" id="P9WIH9"/>
    </source>
</evidence>
<evidence type="ECO:0000269" key="2">
    <source>
    </source>
</evidence>
<evidence type="ECO:0000269" key="3">
    <source>
    </source>
</evidence>
<evidence type="ECO:0000303" key="4">
    <source>
    </source>
</evidence>
<evidence type="ECO:0000303" key="5">
    <source>
    </source>
</evidence>
<evidence type="ECO:0000305" key="6"/>
<evidence type="ECO:0007829" key="7">
    <source>
        <dbReference type="PDB" id="5XE2"/>
    </source>
</evidence>
<sequence length="105" mass="11410">MNAPLRGQVYRCDLGYGAKPWLIVSNNARNRHTADVVAVRLTTTRRTIPTWVAMGPSDPLTGYVNADNIETLGKDELGDYLGEVTPATMNKINTALATALGLPWP</sequence>
<accession>P9WII5</accession>
<accession>L0T6U0</accession>
<accession>P64859</accession>
<accession>P71776</accession>
<protein>
    <recommendedName>
        <fullName evidence="6">Endoribonuclease MazF4</fullName>
        <ecNumber>3.1.-.-</ecNumber>
    </recommendedName>
    <alternativeName>
        <fullName>Toxin MazF4</fullName>
    </alternativeName>
    <alternativeName>
        <fullName evidence="5">mRNA interferase MazF-mt7</fullName>
    </alternativeName>
</protein>
<comment type="function">
    <text evidence="2">Toxic component of a type II toxin-antitoxin (TA) system. Acts as an endoribonuclease (mRNA interferase) on single-strand mRNA, cleaving between the first and second bases in the sequence UCGCU. Overexpression in M.smegmatis but not E.coli inhibits growth, this effect is neutralized by coexpression with cognate toxin MazE4.</text>
</comment>
<comment type="function">
    <text evidence="3">Residues 29-56 inhibit ssDNA cleavage by DNA topoisomerase. This fragment does not have mRNA cleavage activity but it inhibits growth upon overexpression in M.smegmatis.</text>
</comment>
<comment type="activity regulation">
    <text evidence="3">RNA cleavage is inhibited by the C-terminal domain of DNA topoisomerase I.</text>
</comment>
<comment type="subunit">
    <text evidence="1 3">Forms a complex with cognate antitoxin MazE4 (By similarity). Interacts with DNA topoisomerase I (PubMed:20724443).</text>
</comment>
<comment type="similarity">
    <text evidence="6">Belongs to the PemK/MazF family.</text>
</comment>
<keyword id="KW-0002">3D-structure</keyword>
<keyword id="KW-0255">Endonuclease</keyword>
<keyword id="KW-0378">Hydrolase</keyword>
<keyword id="KW-0540">Nuclease</keyword>
<keyword id="KW-1185">Reference proteome</keyword>
<keyword id="KW-1277">Toxin-antitoxin system</keyword>
<organism>
    <name type="scientific">Mycobacterium tuberculosis (strain ATCC 25618 / H37Rv)</name>
    <dbReference type="NCBI Taxonomy" id="83332"/>
    <lineage>
        <taxon>Bacteria</taxon>
        <taxon>Bacillati</taxon>
        <taxon>Actinomycetota</taxon>
        <taxon>Actinomycetes</taxon>
        <taxon>Mycobacteriales</taxon>
        <taxon>Mycobacteriaceae</taxon>
        <taxon>Mycobacterium</taxon>
        <taxon>Mycobacterium tuberculosis complex</taxon>
    </lineage>
</organism>
<name>MAZF4_MYCTU</name>
<gene>
    <name type="primary">mazF4</name>
    <name evidence="4" type="synonym">mazF-mt7</name>
    <name type="ordered locus">Rv1495</name>
    <name type="ORF">MTCY277.17</name>
</gene>
<proteinExistence type="evidence at protein level"/>